<protein>
    <recommendedName>
        <fullName>UPF0058 protein MTH_224</fullName>
    </recommendedName>
</protein>
<keyword id="KW-1185">Reference proteome</keyword>
<proteinExistence type="inferred from homology"/>
<comment type="similarity">
    <text evidence="1">Belongs to the UPF0058 family.</text>
</comment>
<sequence length="102" mass="11949">MYKDEMIQLHQFLVYVLKYLENGYDIKDECEEYFSLNISPHHIHRTKAEHKYAIFVLSSAISEILARKEGNNLPPNVVNGLSELARRSRKEVVKMEARLEAK</sequence>
<name>Y224_METTH</name>
<gene>
    <name type="ordered locus">MTH_224</name>
</gene>
<dbReference type="EMBL" id="AE000666">
    <property type="protein sequence ID" value="AAB84730.1"/>
    <property type="molecule type" value="Genomic_DNA"/>
</dbReference>
<dbReference type="PIR" id="G69127">
    <property type="entry name" value="G69127"/>
</dbReference>
<dbReference type="RefSeq" id="WP_010875863.1">
    <property type="nucleotide sequence ID" value="NC_000916.1"/>
</dbReference>
<dbReference type="SMR" id="O26326"/>
<dbReference type="STRING" id="187420.MTH_224"/>
<dbReference type="PaxDb" id="187420-MTH_224"/>
<dbReference type="EnsemblBacteria" id="AAB84730">
    <property type="protein sequence ID" value="AAB84730"/>
    <property type="gene ID" value="MTH_224"/>
</dbReference>
<dbReference type="KEGG" id="mth:MTH_224"/>
<dbReference type="HOGENOM" id="CLU_167318_1_0_2"/>
<dbReference type="InParanoid" id="O26326"/>
<dbReference type="Proteomes" id="UP000005223">
    <property type="component" value="Chromosome"/>
</dbReference>
<dbReference type="Gene3D" id="1.20.1270.110">
    <property type="entry name" value="Uncharacterised protein family UPF0058"/>
    <property type="match status" value="1"/>
</dbReference>
<dbReference type="InterPro" id="IPR002753">
    <property type="entry name" value="UPF0058"/>
</dbReference>
<dbReference type="InterPro" id="IPR036519">
    <property type="entry name" value="UPF0058_sf"/>
</dbReference>
<dbReference type="PANTHER" id="PTHR42203">
    <property type="entry name" value="UPF0058 PROTEIN MJ1205"/>
    <property type="match status" value="1"/>
</dbReference>
<dbReference type="PANTHER" id="PTHR42203:SF2">
    <property type="entry name" value="UPF0058 PROTEIN MJ1205"/>
    <property type="match status" value="1"/>
</dbReference>
<dbReference type="Pfam" id="PF01893">
    <property type="entry name" value="UPF0058"/>
    <property type="match status" value="1"/>
</dbReference>
<dbReference type="SUPFAM" id="SSF140371">
    <property type="entry name" value="Vng1086c-like"/>
    <property type="match status" value="1"/>
</dbReference>
<organism>
    <name type="scientific">Methanothermobacter thermautotrophicus (strain ATCC 29096 / DSM 1053 / JCM 10044 / NBRC 100330 / Delta H)</name>
    <name type="common">Methanobacterium thermoautotrophicum</name>
    <dbReference type="NCBI Taxonomy" id="187420"/>
    <lineage>
        <taxon>Archaea</taxon>
        <taxon>Methanobacteriati</taxon>
        <taxon>Methanobacteriota</taxon>
        <taxon>Methanomada group</taxon>
        <taxon>Methanobacteria</taxon>
        <taxon>Methanobacteriales</taxon>
        <taxon>Methanobacteriaceae</taxon>
        <taxon>Methanothermobacter</taxon>
    </lineage>
</organism>
<evidence type="ECO:0000305" key="1"/>
<reference key="1">
    <citation type="journal article" date="1997" name="J. Bacteriol.">
        <title>Complete genome sequence of Methanobacterium thermoautotrophicum deltaH: functional analysis and comparative genomics.</title>
        <authorList>
            <person name="Smith D.R."/>
            <person name="Doucette-Stamm L.A."/>
            <person name="Deloughery C."/>
            <person name="Lee H.-M."/>
            <person name="Dubois J."/>
            <person name="Aldredge T."/>
            <person name="Bashirzadeh R."/>
            <person name="Blakely D."/>
            <person name="Cook R."/>
            <person name="Gilbert K."/>
            <person name="Harrison D."/>
            <person name="Hoang L."/>
            <person name="Keagle P."/>
            <person name="Lumm W."/>
            <person name="Pothier B."/>
            <person name="Qiu D."/>
            <person name="Spadafora R."/>
            <person name="Vicare R."/>
            <person name="Wang Y."/>
            <person name="Wierzbowski J."/>
            <person name="Gibson R."/>
            <person name="Jiwani N."/>
            <person name="Caruso A."/>
            <person name="Bush D."/>
            <person name="Safer H."/>
            <person name="Patwell D."/>
            <person name="Prabhakar S."/>
            <person name="McDougall S."/>
            <person name="Shimer G."/>
            <person name="Goyal A."/>
            <person name="Pietrovski S."/>
            <person name="Church G.M."/>
            <person name="Daniels C.J."/>
            <person name="Mao J.-I."/>
            <person name="Rice P."/>
            <person name="Noelling J."/>
            <person name="Reeve J.N."/>
        </authorList>
    </citation>
    <scope>NUCLEOTIDE SEQUENCE [LARGE SCALE GENOMIC DNA]</scope>
    <source>
        <strain>ATCC 29096 / DSM 1053 / JCM 10044 / NBRC 100330 / Delta H</strain>
    </source>
</reference>
<feature type="chain" id="PRO_0000135712" description="UPF0058 protein MTH_224">
    <location>
        <begin position="1"/>
        <end position="102"/>
    </location>
</feature>
<accession>O26326</accession>